<comment type="function">
    <text evidence="1">Catalyzes the interconversion of L-alanine and D-alanine. May also act on other amino acids.</text>
</comment>
<comment type="catalytic activity">
    <reaction evidence="1">
        <text>L-alanine = D-alanine</text>
        <dbReference type="Rhea" id="RHEA:20249"/>
        <dbReference type="ChEBI" id="CHEBI:57416"/>
        <dbReference type="ChEBI" id="CHEBI:57972"/>
        <dbReference type="EC" id="5.1.1.1"/>
    </reaction>
</comment>
<comment type="cofactor">
    <cofactor evidence="1">
        <name>pyridoxal 5'-phosphate</name>
        <dbReference type="ChEBI" id="CHEBI:597326"/>
    </cofactor>
</comment>
<comment type="pathway">
    <text evidence="1">Amino-acid biosynthesis; D-alanine biosynthesis; D-alanine from L-alanine: step 1/1.</text>
</comment>
<comment type="similarity">
    <text evidence="1">Belongs to the alanine racemase family.</text>
</comment>
<reference key="1">
    <citation type="journal article" date="2005" name="Infect. Immun.">
        <title>Whole-genome analyses of speciation events in pathogenic Brucellae.</title>
        <authorList>
            <person name="Chain P.S."/>
            <person name="Comerci D.J."/>
            <person name="Tolmasky M.E."/>
            <person name="Larimer F.W."/>
            <person name="Malfatti S.A."/>
            <person name="Vergez L.M."/>
            <person name="Aguero F."/>
            <person name="Land M.L."/>
            <person name="Ugalde R.A."/>
            <person name="Garcia E."/>
        </authorList>
    </citation>
    <scope>NUCLEOTIDE SEQUENCE [LARGE SCALE GENOMIC DNA]</scope>
    <source>
        <strain>2308</strain>
    </source>
</reference>
<gene>
    <name type="primary">alr</name>
    <name type="ordered locus">BAB2_0312</name>
</gene>
<organism>
    <name type="scientific">Brucella abortus (strain 2308)</name>
    <dbReference type="NCBI Taxonomy" id="359391"/>
    <lineage>
        <taxon>Bacteria</taxon>
        <taxon>Pseudomonadati</taxon>
        <taxon>Pseudomonadota</taxon>
        <taxon>Alphaproteobacteria</taxon>
        <taxon>Hyphomicrobiales</taxon>
        <taxon>Brucellaceae</taxon>
        <taxon>Brucella/Ochrobactrum group</taxon>
        <taxon>Brucella</taxon>
    </lineage>
</organism>
<evidence type="ECO:0000255" key="1">
    <source>
        <dbReference type="HAMAP-Rule" id="MF_01201"/>
    </source>
</evidence>
<keyword id="KW-0413">Isomerase</keyword>
<keyword id="KW-0663">Pyridoxal phosphate</keyword>
<keyword id="KW-1185">Reference proteome</keyword>
<dbReference type="EC" id="5.1.1.1" evidence="1"/>
<dbReference type="EMBL" id="AM040265">
    <property type="protein sequence ID" value="CAJ12478.1"/>
    <property type="molecule type" value="Genomic_DNA"/>
</dbReference>
<dbReference type="SMR" id="Q2YIU9"/>
<dbReference type="STRING" id="359391.BAB2_0312"/>
<dbReference type="KEGG" id="bmf:BAB2_0312"/>
<dbReference type="HOGENOM" id="CLU_028393_1_1_5"/>
<dbReference type="UniPathway" id="UPA00042">
    <property type="reaction ID" value="UER00497"/>
</dbReference>
<dbReference type="Proteomes" id="UP000002719">
    <property type="component" value="Chromosome II"/>
</dbReference>
<dbReference type="GO" id="GO:0005829">
    <property type="term" value="C:cytosol"/>
    <property type="evidence" value="ECO:0007669"/>
    <property type="project" value="TreeGrafter"/>
</dbReference>
<dbReference type="GO" id="GO:0008784">
    <property type="term" value="F:alanine racemase activity"/>
    <property type="evidence" value="ECO:0007669"/>
    <property type="project" value="UniProtKB-UniRule"/>
</dbReference>
<dbReference type="GO" id="GO:0030170">
    <property type="term" value="F:pyridoxal phosphate binding"/>
    <property type="evidence" value="ECO:0007669"/>
    <property type="project" value="UniProtKB-UniRule"/>
</dbReference>
<dbReference type="GO" id="GO:0030632">
    <property type="term" value="P:D-alanine biosynthetic process"/>
    <property type="evidence" value="ECO:0007669"/>
    <property type="project" value="UniProtKB-UniRule"/>
</dbReference>
<dbReference type="CDD" id="cd00430">
    <property type="entry name" value="PLPDE_III_AR"/>
    <property type="match status" value="1"/>
</dbReference>
<dbReference type="Gene3D" id="3.20.20.10">
    <property type="entry name" value="Alanine racemase"/>
    <property type="match status" value="1"/>
</dbReference>
<dbReference type="Gene3D" id="2.40.37.10">
    <property type="entry name" value="Lyase, Ornithine Decarboxylase, Chain A, domain 1"/>
    <property type="match status" value="1"/>
</dbReference>
<dbReference type="HAMAP" id="MF_01201">
    <property type="entry name" value="Ala_racemase"/>
    <property type="match status" value="1"/>
</dbReference>
<dbReference type="InterPro" id="IPR000821">
    <property type="entry name" value="Ala_racemase"/>
</dbReference>
<dbReference type="InterPro" id="IPR009006">
    <property type="entry name" value="Ala_racemase/Decarboxylase_C"/>
</dbReference>
<dbReference type="InterPro" id="IPR011079">
    <property type="entry name" value="Ala_racemase_C"/>
</dbReference>
<dbReference type="InterPro" id="IPR001608">
    <property type="entry name" value="Ala_racemase_N"/>
</dbReference>
<dbReference type="InterPro" id="IPR020622">
    <property type="entry name" value="Ala_racemase_pyridoxalP-BS"/>
</dbReference>
<dbReference type="InterPro" id="IPR029066">
    <property type="entry name" value="PLP-binding_barrel"/>
</dbReference>
<dbReference type="NCBIfam" id="TIGR00492">
    <property type="entry name" value="alr"/>
    <property type="match status" value="1"/>
</dbReference>
<dbReference type="PANTHER" id="PTHR30511">
    <property type="entry name" value="ALANINE RACEMASE"/>
    <property type="match status" value="1"/>
</dbReference>
<dbReference type="PANTHER" id="PTHR30511:SF0">
    <property type="entry name" value="ALANINE RACEMASE, CATABOLIC-RELATED"/>
    <property type="match status" value="1"/>
</dbReference>
<dbReference type="Pfam" id="PF00842">
    <property type="entry name" value="Ala_racemase_C"/>
    <property type="match status" value="1"/>
</dbReference>
<dbReference type="Pfam" id="PF01168">
    <property type="entry name" value="Ala_racemase_N"/>
    <property type="match status" value="1"/>
</dbReference>
<dbReference type="PRINTS" id="PR00992">
    <property type="entry name" value="ALARACEMASE"/>
</dbReference>
<dbReference type="SMART" id="SM01005">
    <property type="entry name" value="Ala_racemase_C"/>
    <property type="match status" value="1"/>
</dbReference>
<dbReference type="SUPFAM" id="SSF50621">
    <property type="entry name" value="Alanine racemase C-terminal domain-like"/>
    <property type="match status" value="1"/>
</dbReference>
<dbReference type="SUPFAM" id="SSF51419">
    <property type="entry name" value="PLP-binding barrel"/>
    <property type="match status" value="1"/>
</dbReference>
<dbReference type="PROSITE" id="PS00395">
    <property type="entry name" value="ALANINE_RACEMASE"/>
    <property type="match status" value="1"/>
</dbReference>
<proteinExistence type="inferred from homology"/>
<protein>
    <recommendedName>
        <fullName evidence="1">Alanine racemase</fullName>
        <ecNumber evidence="1">5.1.1.1</ecNumber>
    </recommendedName>
</protein>
<feature type="chain" id="PRO_1000065972" description="Alanine racemase">
    <location>
        <begin position="1"/>
        <end position="396"/>
    </location>
</feature>
<feature type="active site" description="Proton acceptor; specific for D-alanine" evidence="1">
    <location>
        <position position="46"/>
    </location>
</feature>
<feature type="active site" description="Proton acceptor; specific for L-alanine" evidence="1">
    <location>
        <position position="280"/>
    </location>
</feature>
<feature type="binding site" evidence="1">
    <location>
        <position position="145"/>
    </location>
    <ligand>
        <name>substrate</name>
    </ligand>
</feature>
<feature type="binding site" evidence="1">
    <location>
        <position position="328"/>
    </location>
    <ligand>
        <name>substrate</name>
    </ligand>
</feature>
<feature type="modified residue" description="N6-(pyridoxal phosphate)lysine" evidence="1">
    <location>
        <position position="46"/>
    </location>
</feature>
<accession>Q2YIU9</accession>
<name>ALR_BRUA2</name>
<sequence>MSLPFSQDERDLAAGGILTIDLAALRHNYSAIATRIAPTRTAAVVKADAYGLGASRVAPAFYEAGCRDFFVAHLGEAVALKPFLKPDATLYVLNGLQPGTEAACAREGILPVLNSLEQVENWAALATRLGKKLPALLQFDTGMSRLGLSAKEFDRLLENVTLLSRIDIKFAISHLANGDEPGNAVNARQLAKMTALLARLPKLPAALANSGGTFLGKTYYFDLARPGIALYGIDPERQHDFSDKVAHENKKPKHSILPVLTLSARVIQVRDVDKGATVGYGGTYVANGPMRIATIAVGYADGLFRSLSNKGAAFFGDTRLPIIGRVSMDSITLDVTSLPEGTLKLGSLVELIGPHQRLEDVARDCDTIPYEILTALGNRYARVYVYVNGGGTSTTA</sequence>